<keyword id="KW-0158">Chromosome</keyword>
<keyword id="KW-0217">Developmental protein</keyword>
<keyword id="KW-0221">Differentiation</keyword>
<keyword id="KW-0903">Direct protein sequencing</keyword>
<keyword id="KW-0238">DNA-binding</keyword>
<keyword id="KW-0544">Nucleosome core</keyword>
<keyword id="KW-0539">Nucleus</keyword>
<keyword id="KW-1185">Reference proteome</keyword>
<keyword id="KW-0744">Spermatogenesis</keyword>
<evidence type="ECO:0000256" key="1">
    <source>
        <dbReference type="SAM" id="MobiDB-lite"/>
    </source>
</evidence>
<evidence type="ECO:0000269" key="2">
    <source>
    </source>
</evidence>
<reference key="1">
    <citation type="journal article" date="1998" name="Eur. J. Biochem.">
        <title>The amino acid sequence of the ram spermatidal protein 3 -- a transition protein TP3 or TP4?</title>
        <authorList>
            <person name="Chevaillier P."/>
            <person name="Chirat F."/>
            <person name="Sautiere P."/>
        </authorList>
    </citation>
    <scope>NUCLEOTIDE SEQUENCE [GENOMIC DNA / MRNA]</scope>
    <scope>PROTEIN SEQUENCE OF 2-110</scope>
    <source>
        <tissue>Testis</tissue>
    </source>
</reference>
<name>STP3_SHEEP</name>
<dbReference type="EMBL" id="Y18266">
    <property type="protein sequence ID" value="CAA77097.1"/>
    <property type="molecule type" value="Genomic_DNA"/>
</dbReference>
<dbReference type="EMBL" id="AF078926">
    <property type="protein sequence ID" value="AAD09749.1"/>
    <property type="molecule type" value="mRNA"/>
</dbReference>
<dbReference type="RefSeq" id="NP_001009730.1">
    <property type="nucleotide sequence ID" value="NM_001009730.1"/>
</dbReference>
<dbReference type="SMR" id="O97965"/>
<dbReference type="STRING" id="9940.ENSOARP00000021575"/>
<dbReference type="PaxDb" id="9940-ENSOARP00000021575"/>
<dbReference type="Ensembl" id="ENSOART00215078759">
    <property type="protein sequence ID" value="ENSOARP00215043472"/>
    <property type="gene ID" value="ENSOARG00215046347"/>
</dbReference>
<dbReference type="Ensembl" id="ENSOART00215078794">
    <property type="protein sequence ID" value="ENSOARP00215043499"/>
    <property type="gene ID" value="ENSOARG00215046369"/>
</dbReference>
<dbReference type="Ensembl" id="ENSOART00215078893">
    <property type="protein sequence ID" value="ENSOARP00215043564"/>
    <property type="gene ID" value="ENSOARG00215046429"/>
</dbReference>
<dbReference type="Ensembl" id="ENSOART00215079045">
    <property type="protein sequence ID" value="ENSOARP00215043656"/>
    <property type="gene ID" value="ENSOARG00215046519"/>
</dbReference>
<dbReference type="Ensembl" id="ENSOART00215079108">
    <property type="protein sequence ID" value="ENSOARP00215043693"/>
    <property type="gene ID" value="ENSOARG00215046552"/>
</dbReference>
<dbReference type="Ensembl" id="ENSOART00215079160">
    <property type="protein sequence ID" value="ENSOARP00215043722"/>
    <property type="gene ID" value="ENSOARG00215046586"/>
</dbReference>
<dbReference type="Ensembl" id="ENSOART00215079311">
    <property type="protein sequence ID" value="ENSOARP00215043821"/>
    <property type="gene ID" value="ENSOARG00215046672"/>
</dbReference>
<dbReference type="Ensembl" id="ENSOART00215079358">
    <property type="protein sequence ID" value="ENSOARP00215043854"/>
    <property type="gene ID" value="ENSOARG00215046695"/>
</dbReference>
<dbReference type="Ensembl" id="ENSOART00215079492">
    <property type="protein sequence ID" value="ENSOARP00215043947"/>
    <property type="gene ID" value="ENSOARG00215046762"/>
</dbReference>
<dbReference type="Ensembl" id="ENSOART00215079521">
    <property type="protein sequence ID" value="ENSOARP00215043963"/>
    <property type="gene ID" value="ENSOARG00215046778"/>
</dbReference>
<dbReference type="Ensembl" id="ENSOART00215079665">
    <property type="protein sequence ID" value="ENSOARP00215044054"/>
    <property type="gene ID" value="ENSOARG00215046861"/>
</dbReference>
<dbReference type="Ensembl" id="ENSOART00215079693">
    <property type="protein sequence ID" value="ENSOARP00215044074"/>
    <property type="gene ID" value="ENSOARG00215046876"/>
</dbReference>
<dbReference type="Ensembl" id="ENSOART00215079732">
    <property type="protein sequence ID" value="ENSOARP00215044103"/>
    <property type="gene ID" value="ENSOARG00215046898"/>
</dbReference>
<dbReference type="Ensembl" id="ENSOART00215079792">
    <property type="protein sequence ID" value="ENSOARP00215044144"/>
    <property type="gene ID" value="ENSOARG00215046929"/>
</dbReference>
<dbReference type="Ensembl" id="ENSOART00215079824">
    <property type="protein sequence ID" value="ENSOARP00215044166"/>
    <property type="gene ID" value="ENSOARG00215046947"/>
</dbReference>
<dbReference type="Ensembl" id="ENSOART00215080019">
    <property type="protein sequence ID" value="ENSOARP00215044290"/>
    <property type="gene ID" value="ENSOARG00215047053"/>
</dbReference>
<dbReference type="Ensembl" id="ENSOART00215080198">
    <property type="protein sequence ID" value="ENSOARP00215044405"/>
    <property type="gene ID" value="ENSOARG00215047179"/>
</dbReference>
<dbReference type="Ensembl" id="ENSOART00215080262">
    <property type="protein sequence ID" value="ENSOARP00215044438"/>
    <property type="gene ID" value="ENSOARG00215047213"/>
</dbReference>
<dbReference type="Ensembl" id="ENSOART00215080302">
    <property type="protein sequence ID" value="ENSOARP00215044463"/>
    <property type="gene ID" value="ENSOARG00215047251"/>
</dbReference>
<dbReference type="Ensembl" id="ENSOART00220057925">
    <property type="protein sequence ID" value="ENSOARP00220031034"/>
    <property type="gene ID" value="ENSOARG00220034923"/>
</dbReference>
<dbReference type="Ensembl" id="ENSOART00220057960">
    <property type="protein sequence ID" value="ENSOARP00220031051"/>
    <property type="gene ID" value="ENSOARG00220034939"/>
</dbReference>
<dbReference type="Ensembl" id="ENSOART00220058004">
    <property type="protein sequence ID" value="ENSOARP00220031082"/>
    <property type="gene ID" value="ENSOARG00220034971"/>
</dbReference>
<dbReference type="Ensembl" id="ENSOART00220058039">
    <property type="protein sequence ID" value="ENSOARP00220031102"/>
    <property type="gene ID" value="ENSOARG00220034997"/>
</dbReference>
<dbReference type="Ensembl" id="ENSOART00220058068">
    <property type="protein sequence ID" value="ENSOARP00220031119"/>
    <property type="gene ID" value="ENSOARG00220035017"/>
</dbReference>
<dbReference type="Ensembl" id="ENSOART00220058091">
    <property type="protein sequence ID" value="ENSOARP00220031134"/>
    <property type="gene ID" value="ENSOARG00220035027"/>
</dbReference>
<dbReference type="Ensembl" id="ENSOART00220058122">
    <property type="protein sequence ID" value="ENSOARP00220031154"/>
    <property type="gene ID" value="ENSOARG00220035053"/>
</dbReference>
<dbReference type="Ensembl" id="ENSOART00220058183">
    <property type="protein sequence ID" value="ENSOARP00220031187"/>
    <property type="gene ID" value="ENSOARG00220035093"/>
</dbReference>
<dbReference type="Ensembl" id="ENSOART00220085140">
    <property type="protein sequence ID" value="ENSOARP00220045931"/>
    <property type="gene ID" value="ENSOARG00220051242"/>
</dbReference>
<dbReference type="Ensembl" id="ENSOART00220085440">
    <property type="protein sequence ID" value="ENSOARP00220046053"/>
    <property type="gene ID" value="ENSOARG00220051452"/>
</dbReference>
<dbReference type="Ensembl" id="ENSOART00220085495">
    <property type="protein sequence ID" value="ENSOARP00220046075"/>
    <property type="gene ID" value="ENSOARG00220051494"/>
</dbReference>
<dbReference type="Ensembl" id="ENSOART00220085528">
    <property type="protein sequence ID" value="ENSOARP00220046087"/>
    <property type="gene ID" value="ENSOARG00220051515"/>
</dbReference>
<dbReference type="Ensembl" id="ENSOART00220085577">
    <property type="protein sequence ID" value="ENSOARP00220046104"/>
    <property type="gene ID" value="ENSOARG00220051550"/>
</dbReference>
<dbReference type="Ensembl" id="ENSOART00220085628">
    <property type="protein sequence ID" value="ENSOARP00220046123"/>
    <property type="gene ID" value="ENSOARG00220051583"/>
</dbReference>
<dbReference type="Ensembl" id="ENSOART00225077008">
    <property type="protein sequence ID" value="ENSOARP00225039689"/>
    <property type="gene ID" value="ENSOARG00225046337"/>
</dbReference>
<dbReference type="Ensembl" id="ENSOART00225077136">
    <property type="protein sequence ID" value="ENSOARP00225039743"/>
    <property type="gene ID" value="ENSOARG00225046425"/>
</dbReference>
<dbReference type="Ensembl" id="ENSOART00225077142">
    <property type="protein sequence ID" value="ENSOARP00225039747"/>
    <property type="gene ID" value="ENSOARG00225046428"/>
</dbReference>
<dbReference type="Ensembl" id="ENSOART00225077318">
    <property type="protein sequence ID" value="ENSOARP00225039865"/>
    <property type="gene ID" value="ENSOARG00225046549"/>
</dbReference>
<dbReference type="Ensembl" id="ENSOART00225077322">
    <property type="protein sequence ID" value="ENSOARP00225039869"/>
    <property type="gene ID" value="ENSOARG00225046550"/>
</dbReference>
<dbReference type="Ensembl" id="ENSOART00225077330">
    <property type="protein sequence ID" value="ENSOARP00225039877"/>
    <property type="gene ID" value="ENSOARG00225046554"/>
</dbReference>
<dbReference type="Ensembl" id="ENSOART00225077332">
    <property type="protein sequence ID" value="ENSOARP00225039879"/>
    <property type="gene ID" value="ENSOARG00225046556"/>
</dbReference>
<dbReference type="GeneID" id="443035"/>
<dbReference type="KEGG" id="oas:443035"/>
<dbReference type="eggNOG" id="ENOG502TD5A">
    <property type="taxonomic scope" value="Eukaryota"/>
</dbReference>
<dbReference type="OrthoDB" id="9715557at2759"/>
<dbReference type="Proteomes" id="UP000002356">
    <property type="component" value="Unplaced"/>
</dbReference>
<dbReference type="GO" id="GO:0000786">
    <property type="term" value="C:nucleosome"/>
    <property type="evidence" value="ECO:0007669"/>
    <property type="project" value="UniProtKB-KW"/>
</dbReference>
<dbReference type="GO" id="GO:0005634">
    <property type="term" value="C:nucleus"/>
    <property type="evidence" value="ECO:0007669"/>
    <property type="project" value="UniProtKB-SubCell"/>
</dbReference>
<dbReference type="GO" id="GO:0003677">
    <property type="term" value="F:DNA binding"/>
    <property type="evidence" value="ECO:0007669"/>
    <property type="project" value="UniProtKB-KW"/>
</dbReference>
<dbReference type="GO" id="GO:0030154">
    <property type="term" value="P:cell differentiation"/>
    <property type="evidence" value="ECO:0007669"/>
    <property type="project" value="UniProtKB-KW"/>
</dbReference>
<dbReference type="GO" id="GO:0007283">
    <property type="term" value="P:spermatogenesis"/>
    <property type="evidence" value="ECO:0007669"/>
    <property type="project" value="UniProtKB-KW"/>
</dbReference>
<dbReference type="InterPro" id="IPR040433">
    <property type="entry name" value="Spermatid_TP"/>
</dbReference>
<dbReference type="PANTHER" id="PTHR37876">
    <property type="entry name" value="PROTEIN GAR2-LIKE"/>
    <property type="match status" value="1"/>
</dbReference>
<dbReference type="PANTHER" id="PTHR37876:SF2">
    <property type="entry name" value="SPERMATID NUCLEAR TRANSITION PROTEIN 4"/>
    <property type="match status" value="1"/>
</dbReference>
<sequence length="110" mass="13331">MAKGTRKPRQPRRVAVRFASRMKGRKKTLWQRRYRGSVKAPNMTMRVRRPLKGTLRKKIRSYATPSKKVKNTREPNCFLRSCAREKLNQSRKRYQNMRQSQRRGQNQKRR</sequence>
<organism>
    <name type="scientific">Ovis aries</name>
    <name type="common">Sheep</name>
    <dbReference type="NCBI Taxonomy" id="9940"/>
    <lineage>
        <taxon>Eukaryota</taxon>
        <taxon>Metazoa</taxon>
        <taxon>Chordata</taxon>
        <taxon>Craniata</taxon>
        <taxon>Vertebrata</taxon>
        <taxon>Euteleostomi</taxon>
        <taxon>Mammalia</taxon>
        <taxon>Eutheria</taxon>
        <taxon>Laurasiatheria</taxon>
        <taxon>Artiodactyla</taxon>
        <taxon>Ruminantia</taxon>
        <taxon>Pecora</taxon>
        <taxon>Bovidae</taxon>
        <taxon>Caprinae</taxon>
        <taxon>Ovis</taxon>
    </lineage>
</organism>
<proteinExistence type="evidence at protein level"/>
<protein>
    <recommendedName>
        <fullName>Spermatid nuclear transition protein 3</fullName>
        <shortName>STP-3</shortName>
        <shortName>TP-3</shortName>
        <shortName>TP3</shortName>
    </recommendedName>
    <alternativeName>
        <fullName>Spermatidal protein 3</fullName>
    </alternativeName>
</protein>
<accession>O97965</accession>
<comment type="function">
    <text>Involved in nuclear basic protein transition: histones are replaced by spermatid specific proteins which are themselves replaced by protamines in late spermatids.</text>
</comment>
<comment type="subcellular location">
    <subcellularLocation>
        <location>Nucleus</location>
    </subcellularLocation>
    <subcellularLocation>
        <location>Chromosome</location>
    </subcellularLocation>
</comment>
<feature type="initiator methionine" description="Removed" evidence="2">
    <location>
        <position position="1"/>
    </location>
</feature>
<feature type="chain" id="PRO_0000191435" description="Spermatid nuclear transition protein 3">
    <location>
        <begin position="2"/>
        <end position="110"/>
    </location>
</feature>
<feature type="region of interest" description="Disordered" evidence="1">
    <location>
        <begin position="80"/>
        <end position="110"/>
    </location>
</feature>